<proteinExistence type="inferred from homology"/>
<dbReference type="EMBL" id="CP000560">
    <property type="protein sequence ID" value="ABS74146.1"/>
    <property type="molecule type" value="Genomic_DNA"/>
</dbReference>
<dbReference type="RefSeq" id="WP_003153977.1">
    <property type="nucleotide sequence ID" value="NC_009725.2"/>
</dbReference>
<dbReference type="GeneID" id="93080915"/>
<dbReference type="KEGG" id="bay:RBAM_017830"/>
<dbReference type="HOGENOM" id="CLU_216714_0_0_9"/>
<dbReference type="Proteomes" id="UP000001120">
    <property type="component" value="Chromosome"/>
</dbReference>
<dbReference type="GO" id="GO:0042601">
    <property type="term" value="C:endospore-forming forespore"/>
    <property type="evidence" value="ECO:0007669"/>
    <property type="project" value="InterPro"/>
</dbReference>
<dbReference type="GO" id="GO:0030436">
    <property type="term" value="P:asexual sporulation"/>
    <property type="evidence" value="ECO:0007669"/>
    <property type="project" value="UniProtKB-UniRule"/>
</dbReference>
<dbReference type="GO" id="GO:0030435">
    <property type="term" value="P:sporulation resulting in formation of a cellular spore"/>
    <property type="evidence" value="ECO:0007669"/>
    <property type="project" value="UniProtKB-KW"/>
</dbReference>
<dbReference type="HAMAP" id="MF_01505">
    <property type="entry name" value="SspN"/>
    <property type="match status" value="1"/>
</dbReference>
<dbReference type="InterPro" id="IPR012612">
    <property type="entry name" value="SASP_SspN"/>
</dbReference>
<dbReference type="NCBIfam" id="NF006904">
    <property type="entry name" value="PRK09398.1"/>
    <property type="match status" value="1"/>
</dbReference>
<dbReference type="Pfam" id="PF08177">
    <property type="entry name" value="SspN"/>
    <property type="match status" value="1"/>
</dbReference>
<evidence type="ECO:0000255" key="1">
    <source>
        <dbReference type="HAMAP-Rule" id="MF_01505"/>
    </source>
</evidence>
<evidence type="ECO:0000256" key="2">
    <source>
        <dbReference type="SAM" id="MobiDB-lite"/>
    </source>
</evidence>
<accession>A7Z570</accession>
<gene>
    <name evidence="1" type="primary">sspN</name>
    <name type="ordered locus">RBAM_017830</name>
</gene>
<comment type="subcellular location">
    <subcellularLocation>
        <location evidence="1">Spore core</location>
    </subcellularLocation>
</comment>
<comment type="induction">
    <text evidence="1">Expressed only in the forespore compartment of sporulating cells.</text>
</comment>
<comment type="similarity">
    <text evidence="1">Belongs to the SspN family.</text>
</comment>
<sequence length="48" mass="5406">MGINKKDGQPQYAPSHLGTKPVKYKRNKGEKFHDKSNGHPIVMQTKGE</sequence>
<organism>
    <name type="scientific">Bacillus velezensis (strain DSM 23117 / BGSC 10A6 / LMG 26770 / FZB42)</name>
    <name type="common">Bacillus amyloliquefaciens subsp. plantarum</name>
    <dbReference type="NCBI Taxonomy" id="326423"/>
    <lineage>
        <taxon>Bacteria</taxon>
        <taxon>Bacillati</taxon>
        <taxon>Bacillota</taxon>
        <taxon>Bacilli</taxon>
        <taxon>Bacillales</taxon>
        <taxon>Bacillaceae</taxon>
        <taxon>Bacillus</taxon>
        <taxon>Bacillus amyloliquefaciens group</taxon>
    </lineage>
</organism>
<name>SSPN_BACVZ</name>
<keyword id="KW-0749">Sporulation</keyword>
<feature type="chain" id="PRO_1000024481" description="Small, acid-soluble spore protein N">
    <location>
        <begin position="1"/>
        <end position="48"/>
    </location>
</feature>
<feature type="region of interest" description="Disordered" evidence="2">
    <location>
        <begin position="1"/>
        <end position="48"/>
    </location>
</feature>
<feature type="compositionally biased region" description="Basic and acidic residues" evidence="2">
    <location>
        <begin position="27"/>
        <end position="37"/>
    </location>
</feature>
<protein>
    <recommendedName>
        <fullName evidence="1">Small, acid-soluble spore protein N</fullName>
        <shortName evidence="1">SASP N</shortName>
    </recommendedName>
</protein>
<reference key="1">
    <citation type="journal article" date="2007" name="Nat. Biotechnol.">
        <title>Comparative analysis of the complete genome sequence of the plant growth-promoting bacterium Bacillus amyloliquefaciens FZB42.</title>
        <authorList>
            <person name="Chen X.H."/>
            <person name="Koumoutsi A."/>
            <person name="Scholz R."/>
            <person name="Eisenreich A."/>
            <person name="Schneider K."/>
            <person name="Heinemeyer I."/>
            <person name="Morgenstern B."/>
            <person name="Voss B."/>
            <person name="Hess W.R."/>
            <person name="Reva O."/>
            <person name="Junge H."/>
            <person name="Voigt B."/>
            <person name="Jungblut P.R."/>
            <person name="Vater J."/>
            <person name="Suessmuth R."/>
            <person name="Liesegang H."/>
            <person name="Strittmatter A."/>
            <person name="Gottschalk G."/>
            <person name="Borriss R."/>
        </authorList>
    </citation>
    <scope>NUCLEOTIDE SEQUENCE [LARGE SCALE GENOMIC DNA]</scope>
    <source>
        <strain>DSM 23117 / BGSC 10A6 / LMG 26770 / FZB42</strain>
    </source>
</reference>